<gene>
    <name evidence="11" type="primary">EXO70A1</name>
    <name evidence="13" type="ordered locus">At5g03540</name>
    <name evidence="14" type="ORF">F12E4.320</name>
</gene>
<feature type="chain" id="PRO_0000424565" description="Exocyst complex component EXO70A1">
    <location>
        <begin position="1"/>
        <end position="638"/>
    </location>
</feature>
<feature type="region of interest" description="Disordered" evidence="1">
    <location>
        <begin position="163"/>
        <end position="190"/>
    </location>
</feature>
<feature type="helix" evidence="15">
    <location>
        <begin position="76"/>
        <end position="89"/>
    </location>
</feature>
<feature type="helix" evidence="15">
    <location>
        <begin position="103"/>
        <end position="115"/>
    </location>
</feature>
<feature type="helix" evidence="15">
    <location>
        <begin position="128"/>
        <end position="132"/>
    </location>
</feature>
<feature type="helix" evidence="15">
    <location>
        <begin position="134"/>
        <end position="152"/>
    </location>
</feature>
<feature type="helix" evidence="15">
    <location>
        <begin position="206"/>
        <end position="216"/>
    </location>
</feature>
<feature type="helix" evidence="15">
    <location>
        <begin position="225"/>
        <end position="245"/>
    </location>
</feature>
<feature type="helix" evidence="15">
    <location>
        <begin position="260"/>
        <end position="291"/>
    </location>
</feature>
<feature type="helix" evidence="15">
    <location>
        <begin position="301"/>
        <end position="319"/>
    </location>
</feature>
<feature type="helix" evidence="15">
    <location>
        <begin position="332"/>
        <end position="344"/>
    </location>
</feature>
<feature type="helix" evidence="15">
    <location>
        <begin position="346"/>
        <end position="353"/>
    </location>
</feature>
<feature type="helix" evidence="15">
    <location>
        <begin position="359"/>
        <end position="388"/>
    </location>
</feature>
<feature type="helix" evidence="15">
    <location>
        <begin position="403"/>
        <end position="415"/>
    </location>
</feature>
<feature type="turn" evidence="15">
    <location>
        <begin position="416"/>
        <end position="418"/>
    </location>
</feature>
<feature type="helix" evidence="15">
    <location>
        <begin position="419"/>
        <end position="423"/>
    </location>
</feature>
<feature type="turn" evidence="15">
    <location>
        <begin position="428"/>
        <end position="430"/>
    </location>
</feature>
<feature type="helix" evidence="15">
    <location>
        <begin position="436"/>
        <end position="456"/>
    </location>
</feature>
<feature type="helix" evidence="15">
    <location>
        <begin position="464"/>
        <end position="483"/>
    </location>
</feature>
<feature type="turn" evidence="15">
    <location>
        <begin position="486"/>
        <end position="491"/>
    </location>
</feature>
<feature type="helix" evidence="15">
    <location>
        <begin position="494"/>
        <end position="521"/>
    </location>
</feature>
<feature type="helix" evidence="15">
    <location>
        <begin position="546"/>
        <end position="566"/>
    </location>
</feature>
<feature type="helix" evidence="15">
    <location>
        <begin position="574"/>
        <end position="596"/>
    </location>
</feature>
<feature type="helix" evidence="15">
    <location>
        <begin position="617"/>
        <end position="622"/>
    </location>
</feature>
<feature type="strand" evidence="15">
    <location>
        <begin position="625"/>
        <end position="627"/>
    </location>
</feature>
<comment type="function">
    <text evidence="2 4 5 6 8 10">Component of the exocyst complex involved in the docking of exocytic vesicles with fusion sites on the plasma membrane during regulated or polarized secretion. Involved in polarized cell growth and organ morphogenesis. Involved in polarized cell growth and organ morphogenesis. During cytokinesis, involved in cell plate initiation, cell plate maturation and formation of new primary cell wall. Participates in polarized pectin delivery required for the polarized development of the mucilage-producing volcano cells of the seed coat. Involved in the recycling and localization of auxin efflux carriers PIN1 and PIN2, and thus in polar auxin transport regulation. Functions in vesicle trafficking in tracheary elements to regulate patterned secondary cell wall (SCW) thickening (PubMed:27801942).</text>
</comment>
<comment type="subunit">
    <text evidence="5 7 9 10">The exocyst complex is composed of SEC3, SEC5, SEC6, SEC8, SEC10, EXO70A1 and EXO84B. Interacts with SEC3A and EXO84B. Co-localizes with FPP3/VETH1, FPP2/VETH2 and COG2 in vesicle-like small motile compartments (PubMed:25541219). May interact with COG2 (PubMed:27801942).</text>
</comment>
<comment type="interaction">
    <interactant intactId="EBI-1797218">
        <id>Q9LZD3</id>
    </interactant>
    <interactant intactId="EBI-1797182">
        <id>Q94AI6</id>
        <label>SEC6</label>
    </interactant>
    <organismsDiffer>false</organismsDiffer>
    <experiments>3</experiments>
</comment>
<comment type="subcellular location">
    <subcellularLocation>
        <location evidence="3">Cytoplasm</location>
        <location evidence="3">Cytosol</location>
    </subcellularLocation>
    <subcellularLocation>
        <location evidence="5">Cytoplasm</location>
        <location evidence="5">Cytoskeleton</location>
        <location evidence="5">Phragmoplast</location>
    </subcellularLocation>
    <subcellularLocation>
        <location evidence="6">Cell membrane</location>
    </subcellularLocation>
    <subcellularLocation>
        <location evidence="5">Secreted</location>
        <location evidence="5">Cell wall</location>
    </subcellularLocation>
    <text evidence="5 9 10">During cytokinesis, localizes to the nascent cell plate and later to the cell plate insertion site and along the post-cytokinetic wall (PubMed:20870962). Localized at vesicle-like small compartments at cortical microtubules, especially in the presence of FPP3/VETH1, FPP2/VETH2 and COG2 (PubMed:25541219). Confined to helical/annular plasma membrane (PM) domains in protoxylem of roots before the secondary cell wall (SCW) is deposited. After the induction of xylem differentiation, first associated with plasma membrane (PM) foci and later co-localizes with microtubules (MT) organized into regular bundles, especially at the cell cortex (PubMed:27801942).</text>
</comment>
<comment type="alternative products">
    <event type="alternative splicing"/>
    <isoform>
        <id>Q9LZD3-1</id>
        <name>1</name>
        <sequence type="displayed"/>
    </isoform>
    <text>A number of isoforms are produced. According to EST sequences.</text>
</comment>
<comment type="disruption phenotype">
    <text evidence="2 5 8 10">Dwarf and sterile plants with decreased apical dominance. Branched inflorescences due to ectopic initiation of lateral inflorescences instead of flowers. Altered polar growth of root hairs and stigmatic papillae. Reduced cell expansion and aberrant xylem development. Aberrant deposition of xylem secondary cell wall (SCW) (PubMed:27801942).</text>
</comment>
<comment type="similarity">
    <text evidence="12">Belongs to the EXO70 family.</text>
</comment>
<sequence length="638" mass="72299">MAVDSRMDLLSERAVLMRASLQKSQTITDNVVSILGSFDSRLSALETAMRPTQIRTHAIRKAHENIDRTLKAAEVILSQFDLLRQAETKVLKGPHEDLESYLDAIAQLRKIIRYFMSNKSFKSSDGVLNHANSLLAKAQSKLEEEFKQLLASYSKAVEPDRLFDGLPNSLRPSSDGDGGGKPHGGHHNDDAETAAYTLPILIPSRVLPLLHDLAQQMVQAGHQQQLLQIYRDTRSFVLEESLKKLGVEKLSKEDVQRMQWEVLEAKIGNWIHFMRIAVKLLFAGERQVCDQIFRGFDSLSDQCFAEVTVSSVSMLLSFGDAIARSKRSPEKLFVLLDMYEIMRELHTEIETIFKGKACLEIRDSATGLTKRLAQTAQETFGDFEEAVEKDATKTAVLDGTVHPLTSYVINYVKFLFDYQTTLKQLFLEFGNGDDSNSQLASVTMRIMQALQNNLDGKSKQYKDPALTHLFLMNNIHYMVRSVRRSEAKDLLGDDWVQRHRRIVQQHANQYKRVAWTKILQSSSAQGLTSSGGGSLEGGNSSGVSRGLLKERFKMFNMQFDELHQRQSQWTVPDTELRESLRLAVAEVLLPAYRSFLKRFGPLVESGKNPQKYIKYTAEDLERLLGELFEGKSMNEPRR</sequence>
<reference key="1">
    <citation type="journal article" date="2000" name="Nature">
        <title>Sequence and analysis of chromosome 5 of the plant Arabidopsis thaliana.</title>
        <authorList>
            <person name="Tabata S."/>
            <person name="Kaneko T."/>
            <person name="Nakamura Y."/>
            <person name="Kotani H."/>
            <person name="Kato T."/>
            <person name="Asamizu E."/>
            <person name="Miyajima N."/>
            <person name="Sasamoto S."/>
            <person name="Kimura T."/>
            <person name="Hosouchi T."/>
            <person name="Kawashima K."/>
            <person name="Kohara M."/>
            <person name="Matsumoto M."/>
            <person name="Matsuno A."/>
            <person name="Muraki A."/>
            <person name="Nakayama S."/>
            <person name="Nakazaki N."/>
            <person name="Naruo K."/>
            <person name="Okumura S."/>
            <person name="Shinpo S."/>
            <person name="Takeuchi C."/>
            <person name="Wada T."/>
            <person name="Watanabe A."/>
            <person name="Yamada M."/>
            <person name="Yasuda M."/>
            <person name="Sato S."/>
            <person name="de la Bastide M."/>
            <person name="Huang E."/>
            <person name="Spiegel L."/>
            <person name="Gnoj L."/>
            <person name="O'Shaughnessy A."/>
            <person name="Preston R."/>
            <person name="Habermann K."/>
            <person name="Murray J."/>
            <person name="Johnson D."/>
            <person name="Rohlfing T."/>
            <person name="Nelson J."/>
            <person name="Stoneking T."/>
            <person name="Pepin K."/>
            <person name="Spieth J."/>
            <person name="Sekhon M."/>
            <person name="Armstrong J."/>
            <person name="Becker M."/>
            <person name="Belter E."/>
            <person name="Cordum H."/>
            <person name="Cordes M."/>
            <person name="Courtney L."/>
            <person name="Courtney W."/>
            <person name="Dante M."/>
            <person name="Du H."/>
            <person name="Edwards J."/>
            <person name="Fryman J."/>
            <person name="Haakensen B."/>
            <person name="Lamar E."/>
            <person name="Latreille P."/>
            <person name="Leonard S."/>
            <person name="Meyer R."/>
            <person name="Mulvaney E."/>
            <person name="Ozersky P."/>
            <person name="Riley A."/>
            <person name="Strowmatt C."/>
            <person name="Wagner-McPherson C."/>
            <person name="Wollam A."/>
            <person name="Yoakum M."/>
            <person name="Bell M."/>
            <person name="Dedhia N."/>
            <person name="Parnell L."/>
            <person name="Shah R."/>
            <person name="Rodriguez M."/>
            <person name="Hoon See L."/>
            <person name="Vil D."/>
            <person name="Baker J."/>
            <person name="Kirchoff K."/>
            <person name="Toth K."/>
            <person name="King L."/>
            <person name="Bahret A."/>
            <person name="Miller B."/>
            <person name="Marra M.A."/>
            <person name="Martienssen R."/>
            <person name="McCombie W.R."/>
            <person name="Wilson R.K."/>
            <person name="Murphy G."/>
            <person name="Bancroft I."/>
            <person name="Volckaert G."/>
            <person name="Wambutt R."/>
            <person name="Duesterhoeft A."/>
            <person name="Stiekema W."/>
            <person name="Pohl T."/>
            <person name="Entian K.-D."/>
            <person name="Terryn N."/>
            <person name="Hartley N."/>
            <person name="Bent E."/>
            <person name="Johnson S."/>
            <person name="Langham S.-A."/>
            <person name="McCullagh B."/>
            <person name="Robben J."/>
            <person name="Grymonprez B."/>
            <person name="Zimmermann W."/>
            <person name="Ramsperger U."/>
            <person name="Wedler H."/>
            <person name="Balke K."/>
            <person name="Wedler E."/>
            <person name="Peters S."/>
            <person name="van Staveren M."/>
            <person name="Dirkse W."/>
            <person name="Mooijman P."/>
            <person name="Klein Lankhorst R."/>
            <person name="Weitzenegger T."/>
            <person name="Bothe G."/>
            <person name="Rose M."/>
            <person name="Hauf J."/>
            <person name="Berneiser S."/>
            <person name="Hempel S."/>
            <person name="Feldpausch M."/>
            <person name="Lamberth S."/>
            <person name="Villarroel R."/>
            <person name="Gielen J."/>
            <person name="Ardiles W."/>
            <person name="Bents O."/>
            <person name="Lemcke K."/>
            <person name="Kolesov G."/>
            <person name="Mayer K.F.X."/>
            <person name="Rudd S."/>
            <person name="Schoof H."/>
            <person name="Schueller C."/>
            <person name="Zaccaria P."/>
            <person name="Mewes H.-W."/>
            <person name="Bevan M."/>
            <person name="Fransz P.F."/>
        </authorList>
    </citation>
    <scope>NUCLEOTIDE SEQUENCE [LARGE SCALE GENOMIC DNA]</scope>
    <source>
        <strain>cv. Columbia</strain>
    </source>
</reference>
<reference key="2">
    <citation type="journal article" date="2017" name="Plant J.">
        <title>Araport11: a complete reannotation of the Arabidopsis thaliana reference genome.</title>
        <authorList>
            <person name="Cheng C.Y."/>
            <person name="Krishnakumar V."/>
            <person name="Chan A.P."/>
            <person name="Thibaud-Nissen F."/>
            <person name="Schobel S."/>
            <person name="Town C.D."/>
        </authorList>
    </citation>
    <scope>GENOME REANNOTATION</scope>
    <source>
        <strain>cv. Columbia</strain>
    </source>
</reference>
<reference key="3">
    <citation type="journal article" date="2003" name="Science">
        <title>Empirical analysis of transcriptional activity in the Arabidopsis genome.</title>
        <authorList>
            <person name="Yamada K."/>
            <person name="Lim J."/>
            <person name="Dale J.M."/>
            <person name="Chen H."/>
            <person name="Shinn P."/>
            <person name="Palm C.J."/>
            <person name="Southwick A.M."/>
            <person name="Wu H.C."/>
            <person name="Kim C.J."/>
            <person name="Nguyen M."/>
            <person name="Pham P.K."/>
            <person name="Cheuk R.F."/>
            <person name="Karlin-Newmann G."/>
            <person name="Liu S.X."/>
            <person name="Lam B."/>
            <person name="Sakano H."/>
            <person name="Wu T."/>
            <person name="Yu G."/>
            <person name="Miranda M."/>
            <person name="Quach H.L."/>
            <person name="Tripp M."/>
            <person name="Chang C.H."/>
            <person name="Lee J.M."/>
            <person name="Toriumi M.J."/>
            <person name="Chan M.M."/>
            <person name="Tang C.C."/>
            <person name="Onodera C.S."/>
            <person name="Deng J.M."/>
            <person name="Akiyama K."/>
            <person name="Ansari Y."/>
            <person name="Arakawa T."/>
            <person name="Banh J."/>
            <person name="Banno F."/>
            <person name="Bowser L."/>
            <person name="Brooks S.Y."/>
            <person name="Carninci P."/>
            <person name="Chao Q."/>
            <person name="Choy N."/>
            <person name="Enju A."/>
            <person name="Goldsmith A.D."/>
            <person name="Gurjal M."/>
            <person name="Hansen N.F."/>
            <person name="Hayashizaki Y."/>
            <person name="Johnson-Hopson C."/>
            <person name="Hsuan V.W."/>
            <person name="Iida K."/>
            <person name="Karnes M."/>
            <person name="Khan S."/>
            <person name="Koesema E."/>
            <person name="Ishida J."/>
            <person name="Jiang P.X."/>
            <person name="Jones T."/>
            <person name="Kawai J."/>
            <person name="Kamiya A."/>
            <person name="Meyers C."/>
            <person name="Nakajima M."/>
            <person name="Narusaka M."/>
            <person name="Seki M."/>
            <person name="Sakurai T."/>
            <person name="Satou M."/>
            <person name="Tamse R."/>
            <person name="Vaysberg M."/>
            <person name="Wallender E.K."/>
            <person name="Wong C."/>
            <person name="Yamamura Y."/>
            <person name="Yuan S."/>
            <person name="Shinozaki K."/>
            <person name="Davis R.W."/>
            <person name="Theologis A."/>
            <person name="Ecker J.R."/>
        </authorList>
    </citation>
    <scope>NUCLEOTIDE SEQUENCE [LARGE SCALE MRNA]</scope>
    <source>
        <strain>cv. Columbia</strain>
    </source>
</reference>
<reference key="4">
    <citation type="journal article" date="2006" name="Plant J.">
        <title>AtEXO70A1, a member of a family of putative exocyst subunits specifically expanded in land plants, is important for polar growth and plant development.</title>
        <authorList>
            <person name="Synek L."/>
            <person name="Schlager N."/>
            <person name="Elias M."/>
            <person name="Quentin M."/>
            <person name="Hauser M.-T."/>
            <person name="Zarsky V."/>
        </authorList>
    </citation>
    <scope>FUNCTION</scope>
    <scope>DISRUPTION PHENOTYPE</scope>
</reference>
<reference key="5">
    <citation type="journal article" date="2008" name="Plant Cell">
        <title>An exocyst complex functions in plant cell growth in Arabidopsis and tobacco.</title>
        <authorList>
            <person name="Hala M."/>
            <person name="Cole R."/>
            <person name="Synek L."/>
            <person name="Drdova E."/>
            <person name="Pecenkova T."/>
            <person name="Nordheim A."/>
            <person name="Lamkemeyer T."/>
            <person name="Madlung J."/>
            <person name="Hochholdinger F."/>
            <person name="Fowler J.E."/>
            <person name="Zarsky V."/>
        </authorList>
    </citation>
    <scope>COMPONENT OF THE EXOCYST COMPLEX</scope>
</reference>
<reference key="6">
    <citation type="journal article" date="2010" name="New Phytol.">
        <title>Characterization of the Arabidopsis thaliana exocyst complex gene families by phylogenetic, expression profiling, and subcellular localization studies.</title>
        <authorList>
            <person name="Chong Y.T."/>
            <person name="Gidda S.K."/>
            <person name="Sanford C."/>
            <person name="Parkinson J."/>
            <person name="Mullen R.T."/>
            <person name="Goring D.R."/>
        </authorList>
    </citation>
    <scope>GENE FAMILY</scope>
    <scope>NOMENCLATURE</scope>
    <scope>SUBCELLULAR LOCATION</scope>
</reference>
<reference key="7">
    <citation type="journal article" date="2010" name="New Phytol.">
        <title>Arabidopsis exocyst subunits SEC8 and EXO70A1 and exocyst interactor ROH1 are involved in the localized deposition of seed coat pectin.</title>
        <authorList>
            <person name="Kulich I."/>
            <person name="Cole R."/>
            <person name="Drdova E."/>
            <person name="Cvrckova F."/>
            <person name="Soukup A."/>
            <person name="Fowler J."/>
            <person name="Zarsky V."/>
        </authorList>
    </citation>
    <scope>FUNCTION</scope>
</reference>
<reference key="8">
    <citation type="journal article" date="2010" name="Plant Cell">
        <title>The Arabidopsis exocyst complex is involved in cytokinesis and cell plate maturation.</title>
        <authorList>
            <person name="Fendrych M."/>
            <person name="Synek L."/>
            <person name="Pecenkova T."/>
            <person name="Toupalova H."/>
            <person name="Cole R."/>
            <person name="Drdova E."/>
            <person name="Nebesarova J."/>
            <person name="Sedinova M."/>
            <person name="Hala M."/>
            <person name="Fowler J.E."/>
            <person name="Zarsky V."/>
        </authorList>
    </citation>
    <scope>FUNCTION</scope>
    <scope>INTERACTION WITH EXO84B</scope>
    <scope>SUBCELLULAR LOCATION</scope>
    <scope>DISRUPTION PHENOTYPE</scope>
</reference>
<reference key="9">
    <citation type="journal article" date="2013" name="New Phytol.">
        <title>The Arabidopsis exocyst subunit SEC3A is essential for embryo development and accumulates in transient puncta at the plasma membrane.</title>
        <authorList>
            <person name="Zhang Y."/>
            <person name="Immink R."/>
            <person name="Liu C.M."/>
            <person name="Emons A.M."/>
            <person name="Ketelaar T."/>
        </authorList>
    </citation>
    <scope>INTERACTION WITH SEC3A</scope>
</reference>
<reference key="10">
    <citation type="journal article" date="2013" name="Plant Cell">
        <title>EXO70A1-mediated vesicle trafficking is critical for tracheary element development in Arabidopsis.</title>
        <authorList>
            <person name="Li S."/>
            <person name="Chen M."/>
            <person name="Yu D."/>
            <person name="Ren S."/>
            <person name="Sun S."/>
            <person name="Liu L."/>
            <person name="Ketelaar T."/>
            <person name="Emons A.M."/>
            <person name="Liu C.M."/>
        </authorList>
    </citation>
    <scope>FUNCTION</scope>
    <scope>DISRUPTION PHENOTYPE</scope>
</reference>
<reference key="11">
    <citation type="journal article" date="2013" name="Plant J.">
        <title>The exocyst complex contributes to PIN auxin efflux carrier recycling and polar auxin transport in Arabidopsis.</title>
        <authorList>
            <person name="Drdova E.J."/>
            <person name="Synek L."/>
            <person name="Pecenkova T."/>
            <person name="Hala M."/>
            <person name="Kulich I."/>
            <person name="Fowler J.E."/>
            <person name="Murphy A.S."/>
            <person name="Zarsky V."/>
        </authorList>
    </citation>
    <scope>FUNCTION</scope>
    <scope>SUBCELLULAR LOCATION</scope>
</reference>
<reference key="12">
    <citation type="journal article" date="2015" name="Plant Cell Physiol.">
        <title>Novel coiled-coil proteins regulate exocyst association with cortical microtubules in xylem cells via the conserved oligomeric golgi-complex 2 protein.</title>
        <authorList>
            <person name="Oda Y."/>
            <person name="Iida Y."/>
            <person name="Nagashima Y."/>
            <person name="Sugiyama Y."/>
            <person name="Fukuda H."/>
        </authorList>
    </citation>
    <scope>SUBCELLULAR LOCATION</scope>
    <scope>SUBUNIT</scope>
</reference>
<reference key="13">
    <citation type="journal article" date="2017" name="New Phytol.">
        <title>Microtubule-dependent targeting of the exocyst complex is necessary for xylem development in Arabidopsis.</title>
        <authorList>
            <person name="Vukasinovic N."/>
            <person name="Oda Y."/>
            <person name="Pejchar P."/>
            <person name="Synek L."/>
            <person name="Pecenkova T."/>
            <person name="Rawat A."/>
            <person name="Sekeres J."/>
            <person name="Potocky M."/>
            <person name="Zarsky V."/>
        </authorList>
    </citation>
    <scope>FUNCTION</scope>
    <scope>DISRUPTION PHENOTYPE</scope>
    <scope>SUBCELLULAR LOCATION</scope>
    <scope>SUBUNIT</scope>
    <source>
        <strain>cv. Columbia</strain>
    </source>
</reference>
<proteinExistence type="evidence at protein level"/>
<evidence type="ECO:0000256" key="1">
    <source>
        <dbReference type="SAM" id="MobiDB-lite"/>
    </source>
</evidence>
<evidence type="ECO:0000269" key="2">
    <source>
    </source>
</evidence>
<evidence type="ECO:0000269" key="3">
    <source>
    </source>
</evidence>
<evidence type="ECO:0000269" key="4">
    <source>
    </source>
</evidence>
<evidence type="ECO:0000269" key="5">
    <source>
    </source>
</evidence>
<evidence type="ECO:0000269" key="6">
    <source>
    </source>
</evidence>
<evidence type="ECO:0000269" key="7">
    <source>
    </source>
</evidence>
<evidence type="ECO:0000269" key="8">
    <source>
    </source>
</evidence>
<evidence type="ECO:0000269" key="9">
    <source>
    </source>
</evidence>
<evidence type="ECO:0000269" key="10">
    <source>
    </source>
</evidence>
<evidence type="ECO:0000303" key="11">
    <source>
    </source>
</evidence>
<evidence type="ECO:0000305" key="12"/>
<evidence type="ECO:0000312" key="13">
    <source>
        <dbReference type="Araport" id="AT5G03540"/>
    </source>
</evidence>
<evidence type="ECO:0000312" key="14">
    <source>
        <dbReference type="EMBL" id="CAB83315.1"/>
    </source>
</evidence>
<evidence type="ECO:0007829" key="15">
    <source>
        <dbReference type="PDB" id="4RL5"/>
    </source>
</evidence>
<name>E70A1_ARATH</name>
<organism>
    <name type="scientific">Arabidopsis thaliana</name>
    <name type="common">Mouse-ear cress</name>
    <dbReference type="NCBI Taxonomy" id="3702"/>
    <lineage>
        <taxon>Eukaryota</taxon>
        <taxon>Viridiplantae</taxon>
        <taxon>Streptophyta</taxon>
        <taxon>Embryophyta</taxon>
        <taxon>Tracheophyta</taxon>
        <taxon>Spermatophyta</taxon>
        <taxon>Magnoliopsida</taxon>
        <taxon>eudicotyledons</taxon>
        <taxon>Gunneridae</taxon>
        <taxon>Pentapetalae</taxon>
        <taxon>rosids</taxon>
        <taxon>malvids</taxon>
        <taxon>Brassicales</taxon>
        <taxon>Brassicaceae</taxon>
        <taxon>Camelineae</taxon>
        <taxon>Arabidopsis</taxon>
    </lineage>
</organism>
<protein>
    <recommendedName>
        <fullName evidence="11">Exocyst complex component EXO70A1</fullName>
        <shortName evidence="11">AtExo70a1</shortName>
    </recommendedName>
    <alternativeName>
        <fullName evidence="11">Exocyst subunit Exo70 family protein A1</fullName>
    </alternativeName>
</protein>
<keyword id="KW-0002">3D-structure</keyword>
<keyword id="KW-0025">Alternative splicing</keyword>
<keyword id="KW-1003">Cell membrane</keyword>
<keyword id="KW-0134">Cell wall</keyword>
<keyword id="KW-0963">Cytoplasm</keyword>
<keyword id="KW-0206">Cytoskeleton</keyword>
<keyword id="KW-0268">Exocytosis</keyword>
<keyword id="KW-0472">Membrane</keyword>
<keyword id="KW-1185">Reference proteome</keyword>
<keyword id="KW-0964">Secreted</keyword>
<keyword id="KW-0813">Transport</keyword>
<dbReference type="EMBL" id="AL162751">
    <property type="protein sequence ID" value="CAB83315.1"/>
    <property type="molecule type" value="Genomic_DNA"/>
</dbReference>
<dbReference type="EMBL" id="CP002688">
    <property type="protein sequence ID" value="AED90620.1"/>
    <property type="molecule type" value="Genomic_DNA"/>
</dbReference>
<dbReference type="EMBL" id="AY072155">
    <property type="protein sequence ID" value="AAL59977.1"/>
    <property type="molecule type" value="mRNA"/>
</dbReference>
<dbReference type="EMBL" id="AY133751">
    <property type="protein sequence ID" value="AAM91685.1"/>
    <property type="molecule type" value="mRNA"/>
</dbReference>
<dbReference type="PIR" id="T48380">
    <property type="entry name" value="T48380"/>
</dbReference>
<dbReference type="RefSeq" id="NP_195974.2">
    <molecule id="Q9LZD3-1"/>
    <property type="nucleotide sequence ID" value="NM_120434.5"/>
</dbReference>
<dbReference type="PDB" id="4RL5">
    <property type="method" value="X-ray"/>
    <property type="resolution" value="3.10 A"/>
    <property type="chains" value="A/B=75-638"/>
</dbReference>
<dbReference type="PDBsum" id="4RL5"/>
<dbReference type="SMR" id="Q9LZD3"/>
<dbReference type="BioGRID" id="17085">
    <property type="interactions" value="10"/>
</dbReference>
<dbReference type="FunCoup" id="Q9LZD3">
    <property type="interactions" value="4277"/>
</dbReference>
<dbReference type="IntAct" id="Q9LZD3">
    <property type="interactions" value="4"/>
</dbReference>
<dbReference type="STRING" id="3702.Q9LZD3"/>
<dbReference type="TCDB" id="1.F.2.1.3">
    <property type="family name" value="the octameric exocyst (exocyst) family"/>
</dbReference>
<dbReference type="iPTMnet" id="Q9LZD3"/>
<dbReference type="PaxDb" id="3702-AT5G03540.3"/>
<dbReference type="ProteomicsDB" id="222035">
    <molecule id="Q9LZD3-1"/>
</dbReference>
<dbReference type="DNASU" id="831809"/>
<dbReference type="EnsemblPlants" id="AT5G03540.1">
    <molecule id="Q9LZD3-1"/>
    <property type="protein sequence ID" value="AT5G03540.1"/>
    <property type="gene ID" value="AT5G03540"/>
</dbReference>
<dbReference type="GeneID" id="831809"/>
<dbReference type="Gramene" id="AT5G03540.1">
    <molecule id="Q9LZD3-1"/>
    <property type="protein sequence ID" value="AT5G03540.1"/>
    <property type="gene ID" value="AT5G03540"/>
</dbReference>
<dbReference type="KEGG" id="ath:AT5G03540"/>
<dbReference type="Araport" id="AT5G03540"/>
<dbReference type="TAIR" id="AT5G03540">
    <property type="gene designation" value="EXO70A1"/>
</dbReference>
<dbReference type="eggNOG" id="KOG2344">
    <property type="taxonomic scope" value="Eukaryota"/>
</dbReference>
<dbReference type="InParanoid" id="Q9LZD3"/>
<dbReference type="OMA" id="GIIRAGP"/>
<dbReference type="OrthoDB" id="1922221at2759"/>
<dbReference type="PhylomeDB" id="Q9LZD3"/>
<dbReference type="PRO" id="PR:Q9LZD3"/>
<dbReference type="Proteomes" id="UP000006548">
    <property type="component" value="Chromosome 5"/>
</dbReference>
<dbReference type="ExpressionAtlas" id="Q9LZD3">
    <property type="expression patterns" value="baseline and differential"/>
</dbReference>
<dbReference type="GO" id="GO:0031410">
    <property type="term" value="C:cytoplasmic vesicle"/>
    <property type="evidence" value="ECO:0000314"/>
    <property type="project" value="UniProtKB"/>
</dbReference>
<dbReference type="GO" id="GO:0005856">
    <property type="term" value="C:cytoskeleton"/>
    <property type="evidence" value="ECO:0007669"/>
    <property type="project" value="UniProtKB-KW"/>
</dbReference>
<dbReference type="GO" id="GO:0005829">
    <property type="term" value="C:cytosol"/>
    <property type="evidence" value="ECO:0007669"/>
    <property type="project" value="UniProtKB-SubCell"/>
</dbReference>
<dbReference type="GO" id="GO:0000145">
    <property type="term" value="C:exocyst"/>
    <property type="evidence" value="ECO:0007669"/>
    <property type="project" value="InterPro"/>
</dbReference>
<dbReference type="GO" id="GO:0005576">
    <property type="term" value="C:extracellular region"/>
    <property type="evidence" value="ECO:0007669"/>
    <property type="project" value="UniProtKB-KW"/>
</dbReference>
<dbReference type="GO" id="GO:0009524">
    <property type="term" value="C:phragmoplast"/>
    <property type="evidence" value="ECO:0007669"/>
    <property type="project" value="UniProtKB-SubCell"/>
</dbReference>
<dbReference type="GO" id="GO:0005886">
    <property type="term" value="C:plasma membrane"/>
    <property type="evidence" value="ECO:0007669"/>
    <property type="project" value="UniProtKB-SubCell"/>
</dbReference>
<dbReference type="GO" id="GO:0005546">
    <property type="term" value="F:phosphatidylinositol-4,5-bisphosphate binding"/>
    <property type="evidence" value="ECO:0007669"/>
    <property type="project" value="InterPro"/>
</dbReference>
<dbReference type="GO" id="GO:0006887">
    <property type="term" value="P:exocytosis"/>
    <property type="evidence" value="ECO:0007669"/>
    <property type="project" value="UniProtKB-KW"/>
</dbReference>
<dbReference type="GO" id="GO:0090059">
    <property type="term" value="P:protoxylem development"/>
    <property type="evidence" value="ECO:0000315"/>
    <property type="project" value="UniProtKB"/>
</dbReference>
<dbReference type="GO" id="GO:0060178">
    <property type="term" value="P:regulation of exocyst localization"/>
    <property type="evidence" value="ECO:0000314"/>
    <property type="project" value="UniProtKB"/>
</dbReference>
<dbReference type="GO" id="GO:2000652">
    <property type="term" value="P:regulation of secondary cell wall biogenesis"/>
    <property type="evidence" value="ECO:0000315"/>
    <property type="project" value="UniProtKB"/>
</dbReference>
<dbReference type="GO" id="GO:0010089">
    <property type="term" value="P:xylem development"/>
    <property type="evidence" value="ECO:0000315"/>
    <property type="project" value="UniProtKB"/>
</dbReference>
<dbReference type="GO" id="GO:0048759">
    <property type="term" value="P:xylem vessel member cell differentiation"/>
    <property type="evidence" value="ECO:0000315"/>
    <property type="project" value="UniProtKB"/>
</dbReference>
<dbReference type="FunFam" id="1.20.1280.170:FF:000003">
    <property type="entry name" value="Exocyst subunit Exo70 family protein"/>
    <property type="match status" value="1"/>
</dbReference>
<dbReference type="Gene3D" id="1.20.1280.170">
    <property type="entry name" value="Exocyst complex component Exo70"/>
    <property type="match status" value="1"/>
</dbReference>
<dbReference type="InterPro" id="IPR016159">
    <property type="entry name" value="Cullin_repeat-like_dom_sf"/>
</dbReference>
<dbReference type="InterPro" id="IPR004140">
    <property type="entry name" value="Exo70"/>
</dbReference>
<dbReference type="InterPro" id="IPR046364">
    <property type="entry name" value="Exo70_C"/>
</dbReference>
<dbReference type="PANTHER" id="PTHR12542:SF41">
    <property type="entry name" value="EXOCYST COMPLEX COMPONENT 7"/>
    <property type="match status" value="1"/>
</dbReference>
<dbReference type="PANTHER" id="PTHR12542">
    <property type="entry name" value="EXOCYST COMPLEX PROTEIN EXO70"/>
    <property type="match status" value="1"/>
</dbReference>
<dbReference type="Pfam" id="PF03081">
    <property type="entry name" value="Exo70_C"/>
    <property type="match status" value="1"/>
</dbReference>
<dbReference type="Pfam" id="PF20669">
    <property type="entry name" value="Exo70_N"/>
    <property type="match status" value="1"/>
</dbReference>
<dbReference type="SUPFAM" id="SSF74788">
    <property type="entry name" value="Cullin repeat-like"/>
    <property type="match status" value="1"/>
</dbReference>
<accession>Q9LZD3</accession>